<proteinExistence type="inferred from homology"/>
<protein>
    <recommendedName>
        <fullName>Somatotropin</fullName>
    </recommendedName>
    <alternativeName>
        <fullName>Growth hormone</fullName>
    </alternativeName>
</protein>
<comment type="function">
    <text>Plays an important role in growth control. Its major role in stimulating body growth is to stimulate the liver and other tissues to secrete IGF1. It stimulates both the differentiation and proliferation of myoblasts. It also stimulates amino acid uptake and protein synthesis in muscle and other tissues.</text>
</comment>
<comment type="subcellular location">
    <subcellularLocation>
        <location>Secreted</location>
    </subcellularLocation>
</comment>
<comment type="similarity">
    <text evidence="3">Belongs to the somatotropin/prolactin family.</text>
</comment>
<keyword id="KW-1015">Disulfide bond</keyword>
<keyword id="KW-0372">Hormone</keyword>
<keyword id="KW-0479">Metal-binding</keyword>
<keyword id="KW-0597">Phosphoprotein</keyword>
<keyword id="KW-1185">Reference proteome</keyword>
<keyword id="KW-0964">Secreted</keyword>
<keyword id="KW-0732">Signal</keyword>
<keyword id="KW-0862">Zinc</keyword>
<gene>
    <name type="primary">GH1</name>
</gene>
<reference key="1">
    <citation type="journal article" date="1995" name="Gene">
        <title>Cloning and characterisation of the rabbit growth hormone-encoding gene.</title>
        <authorList>
            <person name="Wallis O.C."/>
            <person name="Wallis M."/>
        </authorList>
    </citation>
    <scope>NUCLEOTIDE SEQUENCE [GENOMIC DNA]</scope>
    <source>
        <strain>New Zealand white</strain>
    </source>
</reference>
<sequence length="216" mass="24433">MAAGSWTAGLLAFALLCLPWPQEASAFPAMPLSSLFANAVLRAQHLHQLAADTYKEFERAYIPEGQRYSIQNAQAAFCFSETIPAPTGKDEAQQRSDMELLRFSLLLIQSWLGPVQFLSRAFTNTLVFGTSDRVYEKLKDLEEGIQALMRELEDGSPRVGQLLKQTYDKFDTNLRGDDALLKNYGLLSCFKKDLHKAETYLRVMKCRRFVESSCVF</sequence>
<dbReference type="EMBL" id="Z38127">
    <property type="protein sequence ID" value="CAA86287.1"/>
    <property type="molecule type" value="Genomic_DNA"/>
</dbReference>
<dbReference type="PIR" id="S49483">
    <property type="entry name" value="S49483"/>
</dbReference>
<dbReference type="RefSeq" id="NP_001316004.1">
    <property type="nucleotide sequence ID" value="NM_001329075.1"/>
</dbReference>
<dbReference type="SMR" id="P46407"/>
<dbReference type="FunCoup" id="P46407">
    <property type="interactions" value="13"/>
</dbReference>
<dbReference type="STRING" id="9986.ENSOCUP00000003753"/>
<dbReference type="PaxDb" id="9986-ENSOCUP00000003753"/>
<dbReference type="Ensembl" id="ENSOCUT00000004342.4">
    <property type="protein sequence ID" value="ENSOCUP00000003753.4"/>
    <property type="gene ID" value="ENSOCUG00000004341.4"/>
</dbReference>
<dbReference type="GeneID" id="100356068"/>
<dbReference type="KEGG" id="ocu:100356068"/>
<dbReference type="eggNOG" id="ENOG502R5GJ">
    <property type="taxonomic scope" value="Eukaryota"/>
</dbReference>
<dbReference type="GeneTree" id="ENSGT00950000182818"/>
<dbReference type="InParanoid" id="P46407"/>
<dbReference type="OrthoDB" id="9925773at2759"/>
<dbReference type="Proteomes" id="UP000001811">
    <property type="component" value="Chromosome 19"/>
</dbReference>
<dbReference type="Bgee" id="ENSOCUG00000004341">
    <property type="expression patterns" value="Expressed in blood and 1 other cell type or tissue"/>
</dbReference>
<dbReference type="ExpressionAtlas" id="P46407">
    <property type="expression patterns" value="baseline"/>
</dbReference>
<dbReference type="GO" id="GO:0005615">
    <property type="term" value="C:extracellular space"/>
    <property type="evidence" value="ECO:0007669"/>
    <property type="project" value="Ensembl"/>
</dbReference>
<dbReference type="GO" id="GO:0005634">
    <property type="term" value="C:nucleus"/>
    <property type="evidence" value="ECO:0007669"/>
    <property type="project" value="Ensembl"/>
</dbReference>
<dbReference type="GO" id="GO:0005886">
    <property type="term" value="C:plasma membrane"/>
    <property type="evidence" value="ECO:0007669"/>
    <property type="project" value="Ensembl"/>
</dbReference>
<dbReference type="GO" id="GO:0030141">
    <property type="term" value="C:secretory granule"/>
    <property type="evidence" value="ECO:0007669"/>
    <property type="project" value="Ensembl"/>
</dbReference>
<dbReference type="GO" id="GO:0005802">
    <property type="term" value="C:trans-Golgi network"/>
    <property type="evidence" value="ECO:0007669"/>
    <property type="project" value="Ensembl"/>
</dbReference>
<dbReference type="GO" id="GO:0008083">
    <property type="term" value="F:growth factor activity"/>
    <property type="evidence" value="ECO:0007669"/>
    <property type="project" value="TreeGrafter"/>
</dbReference>
<dbReference type="GO" id="GO:0005131">
    <property type="term" value="F:growth hormone receptor binding"/>
    <property type="evidence" value="ECO:0007669"/>
    <property type="project" value="Ensembl"/>
</dbReference>
<dbReference type="GO" id="GO:0005179">
    <property type="term" value="F:hormone activity"/>
    <property type="evidence" value="ECO:0007669"/>
    <property type="project" value="UniProtKB-KW"/>
</dbReference>
<dbReference type="GO" id="GO:0046872">
    <property type="term" value="F:metal ion binding"/>
    <property type="evidence" value="ECO:0007669"/>
    <property type="project" value="UniProtKB-KW"/>
</dbReference>
<dbReference type="GO" id="GO:0048513">
    <property type="term" value="P:animal organ development"/>
    <property type="evidence" value="ECO:0007669"/>
    <property type="project" value="TreeGrafter"/>
</dbReference>
<dbReference type="GO" id="GO:0032869">
    <property type="term" value="P:cellular response to insulin stimulus"/>
    <property type="evidence" value="ECO:0007669"/>
    <property type="project" value="Ensembl"/>
</dbReference>
<dbReference type="GO" id="GO:0060396">
    <property type="term" value="P:growth hormone receptor signaling pathway"/>
    <property type="evidence" value="ECO:0007669"/>
    <property type="project" value="TreeGrafter"/>
</dbReference>
<dbReference type="GO" id="GO:0040018">
    <property type="term" value="P:positive regulation of multicellular organism growth"/>
    <property type="evidence" value="ECO:0007669"/>
    <property type="project" value="Ensembl"/>
</dbReference>
<dbReference type="GO" id="GO:0046427">
    <property type="term" value="P:positive regulation of receptor signaling pathway via JAK-STAT"/>
    <property type="evidence" value="ECO:0007669"/>
    <property type="project" value="TreeGrafter"/>
</dbReference>
<dbReference type="GO" id="GO:0032094">
    <property type="term" value="P:response to food"/>
    <property type="evidence" value="ECO:0007669"/>
    <property type="project" value="Ensembl"/>
</dbReference>
<dbReference type="CDD" id="cd10285">
    <property type="entry name" value="somatotropin_like"/>
    <property type="match status" value="1"/>
</dbReference>
<dbReference type="FunFam" id="1.20.1250.10:FF:000002">
    <property type="entry name" value="Growth hormone"/>
    <property type="match status" value="1"/>
</dbReference>
<dbReference type="Gene3D" id="1.20.1250.10">
    <property type="match status" value="1"/>
</dbReference>
<dbReference type="InterPro" id="IPR009079">
    <property type="entry name" value="4_helix_cytokine-like_core"/>
</dbReference>
<dbReference type="InterPro" id="IPR034975">
    <property type="entry name" value="Somatotropin"/>
</dbReference>
<dbReference type="InterPro" id="IPR001400">
    <property type="entry name" value="Somatotropin/Prolactin"/>
</dbReference>
<dbReference type="InterPro" id="IPR018116">
    <property type="entry name" value="Somatotropin_CS"/>
</dbReference>
<dbReference type="PANTHER" id="PTHR11417:SF2">
    <property type="entry name" value="SOMATOTROPIN"/>
    <property type="match status" value="1"/>
</dbReference>
<dbReference type="PANTHER" id="PTHR11417">
    <property type="entry name" value="SOMATOTROPIN,PROLACTIN"/>
    <property type="match status" value="1"/>
</dbReference>
<dbReference type="Pfam" id="PF00103">
    <property type="entry name" value="Hormone_1"/>
    <property type="match status" value="1"/>
</dbReference>
<dbReference type="PRINTS" id="PR00836">
    <property type="entry name" value="SOMATOTROPIN"/>
</dbReference>
<dbReference type="SUPFAM" id="SSF47266">
    <property type="entry name" value="4-helical cytokines"/>
    <property type="match status" value="1"/>
</dbReference>
<dbReference type="PROSITE" id="PS00266">
    <property type="entry name" value="SOMATOTROPIN_1"/>
    <property type="match status" value="1"/>
</dbReference>
<dbReference type="PROSITE" id="PS00338">
    <property type="entry name" value="SOMATOTROPIN_2"/>
    <property type="match status" value="1"/>
</dbReference>
<organism>
    <name type="scientific">Oryctolagus cuniculus</name>
    <name type="common">Rabbit</name>
    <dbReference type="NCBI Taxonomy" id="9986"/>
    <lineage>
        <taxon>Eukaryota</taxon>
        <taxon>Metazoa</taxon>
        <taxon>Chordata</taxon>
        <taxon>Craniata</taxon>
        <taxon>Vertebrata</taxon>
        <taxon>Euteleostomi</taxon>
        <taxon>Mammalia</taxon>
        <taxon>Eutheria</taxon>
        <taxon>Euarchontoglires</taxon>
        <taxon>Glires</taxon>
        <taxon>Lagomorpha</taxon>
        <taxon>Leporidae</taxon>
        <taxon>Oryctolagus</taxon>
    </lineage>
</organism>
<feature type="signal peptide" evidence="1">
    <location>
        <begin position="1"/>
        <end position="26"/>
    </location>
</feature>
<feature type="chain" id="PRO_0000032997" description="Somatotropin">
    <location>
        <begin position="27"/>
        <end position="216"/>
    </location>
</feature>
<feature type="binding site" evidence="1">
    <location>
        <position position="45"/>
    </location>
    <ligand>
        <name>Zn(2+)</name>
        <dbReference type="ChEBI" id="CHEBI:29105"/>
    </ligand>
</feature>
<feature type="binding site" evidence="1">
    <location>
        <position position="198"/>
    </location>
    <ligand>
        <name>Zn(2+)</name>
        <dbReference type="ChEBI" id="CHEBI:29105"/>
    </ligand>
</feature>
<feature type="modified residue" description="Phosphoserine" evidence="2">
    <location>
        <position position="131"/>
    </location>
</feature>
<feature type="disulfide bond" evidence="1">
    <location>
        <begin position="78"/>
        <end position="189"/>
    </location>
</feature>
<feature type="disulfide bond" evidence="1">
    <location>
        <begin position="206"/>
        <end position="214"/>
    </location>
</feature>
<accession>P46407</accession>
<evidence type="ECO:0000250" key="1"/>
<evidence type="ECO:0000250" key="2">
    <source>
        <dbReference type="UniProtKB" id="P01241"/>
    </source>
</evidence>
<evidence type="ECO:0000305" key="3"/>
<name>SOMA_RABIT</name>